<dbReference type="EC" id="2.7.7.23" evidence="1"/>
<dbReference type="EC" id="2.3.1.157" evidence="1"/>
<dbReference type="EMBL" id="CP000557">
    <property type="protein sequence ID" value="ABO65430.1"/>
    <property type="molecule type" value="Genomic_DNA"/>
</dbReference>
<dbReference type="RefSeq" id="WP_011886607.1">
    <property type="nucleotide sequence ID" value="NC_009328.1"/>
</dbReference>
<dbReference type="SMR" id="A4IJC6"/>
<dbReference type="GeneID" id="87622403"/>
<dbReference type="KEGG" id="gtn:GTNG_0043"/>
<dbReference type="eggNOG" id="COG1207">
    <property type="taxonomic scope" value="Bacteria"/>
</dbReference>
<dbReference type="HOGENOM" id="CLU_029499_15_2_9"/>
<dbReference type="UniPathway" id="UPA00113">
    <property type="reaction ID" value="UER00532"/>
</dbReference>
<dbReference type="UniPathway" id="UPA00113">
    <property type="reaction ID" value="UER00533"/>
</dbReference>
<dbReference type="UniPathway" id="UPA00973"/>
<dbReference type="Proteomes" id="UP000001578">
    <property type="component" value="Chromosome"/>
</dbReference>
<dbReference type="GO" id="GO:0005737">
    <property type="term" value="C:cytoplasm"/>
    <property type="evidence" value="ECO:0007669"/>
    <property type="project" value="UniProtKB-SubCell"/>
</dbReference>
<dbReference type="GO" id="GO:0016020">
    <property type="term" value="C:membrane"/>
    <property type="evidence" value="ECO:0007669"/>
    <property type="project" value="GOC"/>
</dbReference>
<dbReference type="GO" id="GO:0019134">
    <property type="term" value="F:glucosamine-1-phosphate N-acetyltransferase activity"/>
    <property type="evidence" value="ECO:0007669"/>
    <property type="project" value="UniProtKB-UniRule"/>
</dbReference>
<dbReference type="GO" id="GO:0000287">
    <property type="term" value="F:magnesium ion binding"/>
    <property type="evidence" value="ECO:0007669"/>
    <property type="project" value="UniProtKB-UniRule"/>
</dbReference>
<dbReference type="GO" id="GO:0003977">
    <property type="term" value="F:UDP-N-acetylglucosamine diphosphorylase activity"/>
    <property type="evidence" value="ECO:0007669"/>
    <property type="project" value="UniProtKB-UniRule"/>
</dbReference>
<dbReference type="GO" id="GO:0000902">
    <property type="term" value="P:cell morphogenesis"/>
    <property type="evidence" value="ECO:0007669"/>
    <property type="project" value="UniProtKB-UniRule"/>
</dbReference>
<dbReference type="GO" id="GO:0071555">
    <property type="term" value="P:cell wall organization"/>
    <property type="evidence" value="ECO:0007669"/>
    <property type="project" value="UniProtKB-KW"/>
</dbReference>
<dbReference type="GO" id="GO:0009245">
    <property type="term" value="P:lipid A biosynthetic process"/>
    <property type="evidence" value="ECO:0007669"/>
    <property type="project" value="UniProtKB-UniRule"/>
</dbReference>
<dbReference type="GO" id="GO:0009252">
    <property type="term" value="P:peptidoglycan biosynthetic process"/>
    <property type="evidence" value="ECO:0007669"/>
    <property type="project" value="UniProtKB-UniRule"/>
</dbReference>
<dbReference type="GO" id="GO:0008360">
    <property type="term" value="P:regulation of cell shape"/>
    <property type="evidence" value="ECO:0007669"/>
    <property type="project" value="UniProtKB-KW"/>
</dbReference>
<dbReference type="GO" id="GO:0006048">
    <property type="term" value="P:UDP-N-acetylglucosamine biosynthetic process"/>
    <property type="evidence" value="ECO:0007669"/>
    <property type="project" value="UniProtKB-UniPathway"/>
</dbReference>
<dbReference type="CDD" id="cd02540">
    <property type="entry name" value="GT2_GlmU_N_bac"/>
    <property type="match status" value="1"/>
</dbReference>
<dbReference type="CDD" id="cd03353">
    <property type="entry name" value="LbH_GlmU_C"/>
    <property type="match status" value="1"/>
</dbReference>
<dbReference type="Gene3D" id="2.160.10.10">
    <property type="entry name" value="Hexapeptide repeat proteins"/>
    <property type="match status" value="1"/>
</dbReference>
<dbReference type="Gene3D" id="3.90.550.10">
    <property type="entry name" value="Spore Coat Polysaccharide Biosynthesis Protein SpsA, Chain A"/>
    <property type="match status" value="1"/>
</dbReference>
<dbReference type="HAMAP" id="MF_01631">
    <property type="entry name" value="GlmU"/>
    <property type="match status" value="1"/>
</dbReference>
<dbReference type="InterPro" id="IPR005882">
    <property type="entry name" value="Bifunctional_GlmU"/>
</dbReference>
<dbReference type="InterPro" id="IPR050065">
    <property type="entry name" value="GlmU-like"/>
</dbReference>
<dbReference type="InterPro" id="IPR038009">
    <property type="entry name" value="GlmU_C_LbH"/>
</dbReference>
<dbReference type="InterPro" id="IPR001451">
    <property type="entry name" value="Hexapep"/>
</dbReference>
<dbReference type="InterPro" id="IPR018357">
    <property type="entry name" value="Hexapep_transf_CS"/>
</dbReference>
<dbReference type="InterPro" id="IPR005835">
    <property type="entry name" value="NTP_transferase_dom"/>
</dbReference>
<dbReference type="InterPro" id="IPR029044">
    <property type="entry name" value="Nucleotide-diphossugar_trans"/>
</dbReference>
<dbReference type="InterPro" id="IPR011004">
    <property type="entry name" value="Trimer_LpxA-like_sf"/>
</dbReference>
<dbReference type="NCBIfam" id="TIGR01173">
    <property type="entry name" value="glmU"/>
    <property type="match status" value="1"/>
</dbReference>
<dbReference type="NCBIfam" id="NF010934">
    <property type="entry name" value="PRK14354.1"/>
    <property type="match status" value="1"/>
</dbReference>
<dbReference type="PANTHER" id="PTHR43584:SF3">
    <property type="entry name" value="BIFUNCTIONAL PROTEIN GLMU"/>
    <property type="match status" value="1"/>
</dbReference>
<dbReference type="PANTHER" id="PTHR43584">
    <property type="entry name" value="NUCLEOTIDYL TRANSFERASE"/>
    <property type="match status" value="1"/>
</dbReference>
<dbReference type="Pfam" id="PF00132">
    <property type="entry name" value="Hexapep"/>
    <property type="match status" value="3"/>
</dbReference>
<dbReference type="Pfam" id="PF00483">
    <property type="entry name" value="NTP_transferase"/>
    <property type="match status" value="1"/>
</dbReference>
<dbReference type="SUPFAM" id="SSF53448">
    <property type="entry name" value="Nucleotide-diphospho-sugar transferases"/>
    <property type="match status" value="1"/>
</dbReference>
<dbReference type="SUPFAM" id="SSF51161">
    <property type="entry name" value="Trimeric LpxA-like enzymes"/>
    <property type="match status" value="1"/>
</dbReference>
<dbReference type="PROSITE" id="PS00101">
    <property type="entry name" value="HEXAPEP_TRANSFERASES"/>
    <property type="match status" value="1"/>
</dbReference>
<evidence type="ECO:0000255" key="1">
    <source>
        <dbReference type="HAMAP-Rule" id="MF_01631"/>
    </source>
</evidence>
<accession>A4IJC6</accession>
<gene>
    <name evidence="1" type="primary">glmU</name>
    <name type="ordered locus">GTNG_0043</name>
</gene>
<protein>
    <recommendedName>
        <fullName evidence="1">Bifunctional protein GlmU</fullName>
    </recommendedName>
    <domain>
        <recommendedName>
            <fullName evidence="1">UDP-N-acetylglucosamine pyrophosphorylase</fullName>
            <ecNumber evidence="1">2.7.7.23</ecNumber>
        </recommendedName>
        <alternativeName>
            <fullName evidence="1">N-acetylglucosamine-1-phosphate uridyltransferase</fullName>
        </alternativeName>
    </domain>
    <domain>
        <recommendedName>
            <fullName evidence="1">Glucosamine-1-phosphate N-acetyltransferase</fullName>
            <ecNumber evidence="1">2.3.1.157</ecNumber>
        </recommendedName>
    </domain>
</protein>
<keyword id="KW-0012">Acyltransferase</keyword>
<keyword id="KW-0133">Cell shape</keyword>
<keyword id="KW-0961">Cell wall biogenesis/degradation</keyword>
<keyword id="KW-0963">Cytoplasm</keyword>
<keyword id="KW-0460">Magnesium</keyword>
<keyword id="KW-0479">Metal-binding</keyword>
<keyword id="KW-0511">Multifunctional enzyme</keyword>
<keyword id="KW-0548">Nucleotidyltransferase</keyword>
<keyword id="KW-0573">Peptidoglycan synthesis</keyword>
<keyword id="KW-0677">Repeat</keyword>
<keyword id="KW-0808">Transferase</keyword>
<name>GLMU_GEOTN</name>
<comment type="function">
    <text evidence="1">Catalyzes the last two sequential reactions in the de novo biosynthetic pathway for UDP-N-acetylglucosamine (UDP-GlcNAc). The C-terminal domain catalyzes the transfer of acetyl group from acetyl coenzyme A to glucosamine-1-phosphate (GlcN-1-P) to produce N-acetylglucosamine-1-phosphate (GlcNAc-1-P), which is converted into UDP-GlcNAc by the transfer of uridine 5-monophosphate (from uridine 5-triphosphate), a reaction catalyzed by the N-terminal domain.</text>
</comment>
<comment type="catalytic activity">
    <reaction evidence="1">
        <text>alpha-D-glucosamine 1-phosphate + acetyl-CoA = N-acetyl-alpha-D-glucosamine 1-phosphate + CoA + H(+)</text>
        <dbReference type="Rhea" id="RHEA:13725"/>
        <dbReference type="ChEBI" id="CHEBI:15378"/>
        <dbReference type="ChEBI" id="CHEBI:57287"/>
        <dbReference type="ChEBI" id="CHEBI:57288"/>
        <dbReference type="ChEBI" id="CHEBI:57776"/>
        <dbReference type="ChEBI" id="CHEBI:58516"/>
        <dbReference type="EC" id="2.3.1.157"/>
    </reaction>
</comment>
<comment type="catalytic activity">
    <reaction evidence="1">
        <text>N-acetyl-alpha-D-glucosamine 1-phosphate + UTP + H(+) = UDP-N-acetyl-alpha-D-glucosamine + diphosphate</text>
        <dbReference type="Rhea" id="RHEA:13509"/>
        <dbReference type="ChEBI" id="CHEBI:15378"/>
        <dbReference type="ChEBI" id="CHEBI:33019"/>
        <dbReference type="ChEBI" id="CHEBI:46398"/>
        <dbReference type="ChEBI" id="CHEBI:57705"/>
        <dbReference type="ChEBI" id="CHEBI:57776"/>
        <dbReference type="EC" id="2.7.7.23"/>
    </reaction>
</comment>
<comment type="cofactor">
    <cofactor evidence="1">
        <name>Mg(2+)</name>
        <dbReference type="ChEBI" id="CHEBI:18420"/>
    </cofactor>
    <text evidence="1">Binds 1 Mg(2+) ion per subunit.</text>
</comment>
<comment type="pathway">
    <text evidence="1">Nucleotide-sugar biosynthesis; UDP-N-acetyl-alpha-D-glucosamine biosynthesis; N-acetyl-alpha-D-glucosamine 1-phosphate from alpha-D-glucosamine 6-phosphate (route II): step 2/2.</text>
</comment>
<comment type="pathway">
    <text evidence="1">Nucleotide-sugar biosynthesis; UDP-N-acetyl-alpha-D-glucosamine biosynthesis; UDP-N-acetyl-alpha-D-glucosamine from N-acetyl-alpha-D-glucosamine 1-phosphate: step 1/1.</text>
</comment>
<comment type="pathway">
    <text evidence="1">Bacterial outer membrane biogenesis; LPS lipid A biosynthesis.</text>
</comment>
<comment type="subunit">
    <text evidence="1">Homotrimer.</text>
</comment>
<comment type="subcellular location">
    <subcellularLocation>
        <location evidence="1">Cytoplasm</location>
    </subcellularLocation>
</comment>
<comment type="similarity">
    <text evidence="1">In the N-terminal section; belongs to the N-acetylglucosamine-1-phosphate uridyltransferase family.</text>
</comment>
<comment type="similarity">
    <text evidence="1">In the C-terminal section; belongs to the transferase hexapeptide repeat family.</text>
</comment>
<feature type="chain" id="PRO_1000056159" description="Bifunctional protein GlmU">
    <location>
        <begin position="1"/>
        <end position="459"/>
    </location>
</feature>
<feature type="region of interest" description="Pyrophosphorylase" evidence="1">
    <location>
        <begin position="1"/>
        <end position="230"/>
    </location>
</feature>
<feature type="region of interest" description="Linker" evidence="1">
    <location>
        <begin position="231"/>
        <end position="251"/>
    </location>
</feature>
<feature type="region of interest" description="N-acetyltransferase" evidence="1">
    <location>
        <begin position="252"/>
        <end position="459"/>
    </location>
</feature>
<feature type="active site" description="Proton acceptor" evidence="1">
    <location>
        <position position="363"/>
    </location>
</feature>
<feature type="binding site" evidence="1">
    <location>
        <begin position="9"/>
        <end position="12"/>
    </location>
    <ligand>
        <name>UDP-N-acetyl-alpha-D-glucosamine</name>
        <dbReference type="ChEBI" id="CHEBI:57705"/>
    </ligand>
</feature>
<feature type="binding site" evidence="1">
    <location>
        <position position="23"/>
    </location>
    <ligand>
        <name>UDP-N-acetyl-alpha-D-glucosamine</name>
        <dbReference type="ChEBI" id="CHEBI:57705"/>
    </ligand>
</feature>
<feature type="binding site" evidence="1">
    <location>
        <position position="73"/>
    </location>
    <ligand>
        <name>UDP-N-acetyl-alpha-D-glucosamine</name>
        <dbReference type="ChEBI" id="CHEBI:57705"/>
    </ligand>
</feature>
<feature type="binding site" evidence="1">
    <location>
        <begin position="78"/>
        <end position="79"/>
    </location>
    <ligand>
        <name>UDP-N-acetyl-alpha-D-glucosamine</name>
        <dbReference type="ChEBI" id="CHEBI:57705"/>
    </ligand>
</feature>
<feature type="binding site" evidence="1">
    <location>
        <position position="103"/>
    </location>
    <ligand>
        <name>Mg(2+)</name>
        <dbReference type="ChEBI" id="CHEBI:18420"/>
    </ligand>
</feature>
<feature type="binding site" evidence="1">
    <location>
        <position position="140"/>
    </location>
    <ligand>
        <name>UDP-N-acetyl-alpha-D-glucosamine</name>
        <dbReference type="ChEBI" id="CHEBI:57705"/>
    </ligand>
</feature>
<feature type="binding site" evidence="1">
    <location>
        <position position="155"/>
    </location>
    <ligand>
        <name>UDP-N-acetyl-alpha-D-glucosamine</name>
        <dbReference type="ChEBI" id="CHEBI:57705"/>
    </ligand>
</feature>
<feature type="binding site" evidence="1">
    <location>
        <position position="170"/>
    </location>
    <ligand>
        <name>UDP-N-acetyl-alpha-D-glucosamine</name>
        <dbReference type="ChEBI" id="CHEBI:57705"/>
    </ligand>
</feature>
<feature type="binding site" evidence="1">
    <location>
        <position position="228"/>
    </location>
    <ligand>
        <name>Mg(2+)</name>
        <dbReference type="ChEBI" id="CHEBI:18420"/>
    </ligand>
</feature>
<feature type="binding site" evidence="1">
    <location>
        <position position="228"/>
    </location>
    <ligand>
        <name>UDP-N-acetyl-alpha-D-glucosamine</name>
        <dbReference type="ChEBI" id="CHEBI:57705"/>
    </ligand>
</feature>
<feature type="binding site" evidence="1">
    <location>
        <position position="333"/>
    </location>
    <ligand>
        <name>UDP-N-acetyl-alpha-D-glucosamine</name>
        <dbReference type="ChEBI" id="CHEBI:57705"/>
    </ligand>
</feature>
<feature type="binding site" evidence="1">
    <location>
        <position position="351"/>
    </location>
    <ligand>
        <name>UDP-N-acetyl-alpha-D-glucosamine</name>
        <dbReference type="ChEBI" id="CHEBI:57705"/>
    </ligand>
</feature>
<feature type="binding site" evidence="1">
    <location>
        <position position="366"/>
    </location>
    <ligand>
        <name>UDP-N-acetyl-alpha-D-glucosamine</name>
        <dbReference type="ChEBI" id="CHEBI:57705"/>
    </ligand>
</feature>
<feature type="binding site" evidence="1">
    <location>
        <position position="377"/>
    </location>
    <ligand>
        <name>UDP-N-acetyl-alpha-D-glucosamine</name>
        <dbReference type="ChEBI" id="CHEBI:57705"/>
    </ligand>
</feature>
<feature type="binding site" evidence="1">
    <location>
        <begin position="386"/>
        <end position="387"/>
    </location>
    <ligand>
        <name>acetyl-CoA</name>
        <dbReference type="ChEBI" id="CHEBI:57288"/>
    </ligand>
</feature>
<feature type="binding site" evidence="1">
    <location>
        <position position="423"/>
    </location>
    <ligand>
        <name>acetyl-CoA</name>
        <dbReference type="ChEBI" id="CHEBI:57288"/>
    </ligand>
</feature>
<feature type="binding site" evidence="1">
    <location>
        <position position="440"/>
    </location>
    <ligand>
        <name>acetyl-CoA</name>
        <dbReference type="ChEBI" id="CHEBI:57288"/>
    </ligand>
</feature>
<proteinExistence type="inferred from homology"/>
<sequence length="459" mass="49704">MVKRYAVILAAGQGTRMKSKLYKVLHPVCGKPMVQHVVDQVSKLGVEKTIAVVGFGAEQVKEQLGAQCEYALQEKQLGTAHAVMQAAPHLQNLEGITIVVCGDTPLITAETMEALLEHHMTAGAKATVLTAIADDPTGYGRIVRNSDGHVEKIVEHKDANEQEREIREINTGTYCFDNRMLFQALTKVTNNNAQGEYYLTDVIEIIKADGGIVSAYQAPSFDETIGINDRIALAEAERIMRDRICRQHMKNGVTIIDPACTYISAEATIGRDTVIYPGTVIEGKTVIGEDCTIGPHSEIKNCHIGHRTSIRHSVAHDSEIGDDVTIGPFAHIRPLSKIDDEVRIGNFVEVKKSTFGKGSKASHLSYIGDAEVGADVNLGCGSITVNYDGVHKYRTKIEDGAFIGCNANLIAPVTIGQGAYVAAGSTVTDDVPGRALAIGRARQVNKENYVDRLRGKKKS</sequence>
<organism>
    <name type="scientific">Geobacillus thermodenitrificans (strain NG80-2)</name>
    <dbReference type="NCBI Taxonomy" id="420246"/>
    <lineage>
        <taxon>Bacteria</taxon>
        <taxon>Bacillati</taxon>
        <taxon>Bacillota</taxon>
        <taxon>Bacilli</taxon>
        <taxon>Bacillales</taxon>
        <taxon>Anoxybacillaceae</taxon>
        <taxon>Geobacillus</taxon>
    </lineage>
</organism>
<reference key="1">
    <citation type="journal article" date="2007" name="Proc. Natl. Acad. Sci. U.S.A.">
        <title>Genome and proteome of long-chain alkane degrading Geobacillus thermodenitrificans NG80-2 isolated from a deep-subsurface oil reservoir.</title>
        <authorList>
            <person name="Feng L."/>
            <person name="Wang W."/>
            <person name="Cheng J."/>
            <person name="Ren Y."/>
            <person name="Zhao G."/>
            <person name="Gao C."/>
            <person name="Tang Y."/>
            <person name="Liu X."/>
            <person name="Han W."/>
            <person name="Peng X."/>
            <person name="Liu R."/>
            <person name="Wang L."/>
        </authorList>
    </citation>
    <scope>NUCLEOTIDE SEQUENCE [LARGE SCALE GENOMIC DNA]</scope>
    <source>
        <strain>NG80-2</strain>
    </source>
</reference>